<evidence type="ECO:0000250" key="1"/>
<evidence type="ECO:0000255" key="2"/>
<evidence type="ECO:0000269" key="3">
    <source>
    </source>
</evidence>
<evidence type="ECO:0000269" key="4">
    <source>
    </source>
</evidence>
<evidence type="ECO:0000269" key="5">
    <source>
    </source>
</evidence>
<evidence type="ECO:0000305" key="6"/>
<proteinExistence type="evidence at protein level"/>
<feature type="signal peptide" evidence="2">
    <location>
        <begin position="1"/>
        <end position="18"/>
    </location>
</feature>
<feature type="chain" id="PRO_0000424805" description="Mannan endo-1,6-alpha-mannosidase DCW1">
    <location>
        <begin position="19"/>
        <end position="431"/>
    </location>
</feature>
<feature type="propeptide" id="PRO_0000424806" description="Removed in mature form" evidence="2">
    <location>
        <begin position="432"/>
        <end position="452"/>
    </location>
</feature>
<feature type="lipid moiety-binding region" description="GPI-anchor amidated glycine" evidence="2">
    <location>
        <position position="431"/>
    </location>
</feature>
<feature type="glycosylation site" description="N-linked (GlcNAc...) asparagine" evidence="2">
    <location>
        <position position="25"/>
    </location>
</feature>
<feature type="glycosylation site" description="N-linked (GlcNAc...) asparagine" evidence="2">
    <location>
        <position position="81"/>
    </location>
</feature>
<feature type="glycosylation site" description="N-linked (GlcNAc...) asparagine" evidence="2">
    <location>
        <position position="106"/>
    </location>
</feature>
<feature type="glycosylation site" description="N-linked (GlcNAc...) asparagine" evidence="2">
    <location>
        <position position="130"/>
    </location>
</feature>
<feature type="glycosylation site" description="N-linked (GlcNAc...) asparagine" evidence="2">
    <location>
        <position position="200"/>
    </location>
</feature>
<feature type="glycosylation site" description="N-linked (GlcNAc...) asparagine" evidence="2">
    <location>
        <position position="237"/>
    </location>
</feature>
<feature type="glycosylation site" description="N-linked (GlcNAc...) asparagine" evidence="2">
    <location>
        <position position="240"/>
    </location>
</feature>
<feature type="glycosylation site" description="N-linked (GlcNAc...) asparagine" evidence="2">
    <location>
        <position position="262"/>
    </location>
</feature>
<feature type="glycosylation site" description="N-linked (GlcNAc...) asparagine" evidence="2">
    <location>
        <position position="271"/>
    </location>
</feature>
<feature type="glycosylation site" description="N-linked (GlcNAc...) asparagine" evidence="2">
    <location>
        <position position="286"/>
    </location>
</feature>
<sequence length="452" mass="50348">MKFSIYLIISLFSSFSHAIWLDTNNETTIREDCNIIAKGLLDYYEGTKYGGVIGMFSWPYYWWEAGGAWGSLIDYTFYFDNDTLVPLITDALLYQTGDDDNYIPLNQSTTEGNDDQAFWGIAVMAAAERNFTNPKDPTKAWLTLAQAVFNTMQARWDTETCNGGLRWQIFQWNSGYDYKNSVSNGALFHLAARLARYTGNDSYVVWAERVWDWMYGVGLLTEQNWWFVYDGVKIANNCSNITKYQWSYNQGLMLAGCAYLYNYTEEEKWYNYTIKLLESAQVFFKNISGSMVMYEAACQPSNSCNNDQRSFKAYFSRFLGLTSVLVPQTEPVITKWLVDSANGAAGSCSGGSDGVTCGLSWTDWSQGWDGKWGLGEQMSALEVMQNLMVHKRPAPYTADTGGSSIGNPAAGYGKLTSDATPLSIDGGDKAGAGIITAIIGASLVGSCVWLIL</sequence>
<organism>
    <name type="scientific">Candida albicans (strain SC5314 / ATCC MYA-2876)</name>
    <name type="common">Yeast</name>
    <dbReference type="NCBI Taxonomy" id="237561"/>
    <lineage>
        <taxon>Eukaryota</taxon>
        <taxon>Fungi</taxon>
        <taxon>Dikarya</taxon>
        <taxon>Ascomycota</taxon>
        <taxon>Saccharomycotina</taxon>
        <taxon>Pichiomycetes</taxon>
        <taxon>Debaryomycetaceae</taxon>
        <taxon>Candida/Lodderomyces clade</taxon>
        <taxon>Candida</taxon>
    </lineage>
</organism>
<gene>
    <name type="primary">DCW1</name>
    <name type="synonym">PGA51</name>
    <name type="ordered locus">CAALFM_C201360CA</name>
    <name type="ORF">CaO19.1989</name>
    <name type="ORF">CaO19.9540</name>
</gene>
<keyword id="KW-1003">Cell membrane</keyword>
<keyword id="KW-0961">Cell wall biogenesis/degradation</keyword>
<keyword id="KW-0325">Glycoprotein</keyword>
<keyword id="KW-0326">Glycosidase</keyword>
<keyword id="KW-0336">GPI-anchor</keyword>
<keyword id="KW-0378">Hydrolase</keyword>
<keyword id="KW-0449">Lipoprotein</keyword>
<keyword id="KW-0472">Membrane</keyword>
<keyword id="KW-1185">Reference proteome</keyword>
<keyword id="KW-0732">Signal</keyword>
<name>DCW1_CANAL</name>
<protein>
    <recommendedName>
        <fullName>Mannan endo-1,6-alpha-mannosidase DCW1</fullName>
        <ecNumber>3.2.1.101</ecNumber>
    </recommendedName>
    <alternativeName>
        <fullName>Defective cell wall 1</fullName>
    </alternativeName>
    <alternativeName>
        <fullName>Endo-alpha-1-&gt;6-D-mannanase DCW1</fullName>
    </alternativeName>
    <alternativeName>
        <fullName>GPI-anchored protein 51</fullName>
    </alternativeName>
</protein>
<comment type="function">
    <text evidence="3">Probable mannosidase required for normal synthesis of the cell wall.</text>
</comment>
<comment type="catalytic activity">
    <reaction>
        <text>Random hydrolysis of (1-&gt;6)-alpha-D-mannosidic linkages in unbranched (1-&gt;6)-mannans.</text>
        <dbReference type="EC" id="3.2.1.101"/>
    </reaction>
</comment>
<comment type="subcellular location">
    <subcellularLocation>
        <location evidence="1">Cell membrane</location>
        <topology evidence="1">Lipid-anchor</topology>
        <topology evidence="1">GPI-anchor</topology>
    </subcellularLocation>
</comment>
<comment type="induction">
    <text evidence="4 5">Induced by HAP43 and up-regulated in absence of CYR1.</text>
</comment>
<comment type="similarity">
    <text evidence="6">Belongs to the glycosyl hydrolase 76 family.</text>
</comment>
<accession>Q5AD78</accession>
<accession>A0A1D8PGD3</accession>
<dbReference type="EC" id="3.2.1.101"/>
<dbReference type="EMBL" id="CP017624">
    <property type="protein sequence ID" value="AOW27182.1"/>
    <property type="molecule type" value="Genomic_DNA"/>
</dbReference>
<dbReference type="RefSeq" id="XP_719439.1">
    <property type="nucleotide sequence ID" value="XM_714346.1"/>
</dbReference>
<dbReference type="SMR" id="Q5AD78"/>
<dbReference type="FunCoup" id="Q5AD78">
    <property type="interactions" value="15"/>
</dbReference>
<dbReference type="STRING" id="237561.Q5AD78"/>
<dbReference type="GlyCosmos" id="Q5AD78">
    <property type="glycosylation" value="10 sites, No reported glycans"/>
</dbReference>
<dbReference type="EnsemblFungi" id="C2_01360C_A-T">
    <property type="protein sequence ID" value="C2_01360C_A-T-p1"/>
    <property type="gene ID" value="C2_01360C_A"/>
</dbReference>
<dbReference type="GeneID" id="3638842"/>
<dbReference type="KEGG" id="cal:CAALFM_C201360CA"/>
<dbReference type="CGD" id="CAL0000197643">
    <property type="gene designation" value="DCW1"/>
</dbReference>
<dbReference type="VEuPathDB" id="FungiDB:C2_01360C_A"/>
<dbReference type="eggNOG" id="ENOG502QSWP">
    <property type="taxonomic scope" value="Eukaryota"/>
</dbReference>
<dbReference type="HOGENOM" id="CLU_025694_1_2_1"/>
<dbReference type="InParanoid" id="Q5AD78"/>
<dbReference type="OMA" id="WAPHTYD"/>
<dbReference type="OrthoDB" id="4187847at2759"/>
<dbReference type="PRO" id="PR:Q5AD78"/>
<dbReference type="Proteomes" id="UP000000559">
    <property type="component" value="Chromosome 2"/>
</dbReference>
<dbReference type="GO" id="GO:0005886">
    <property type="term" value="C:plasma membrane"/>
    <property type="evidence" value="ECO:0007669"/>
    <property type="project" value="UniProtKB-SubCell"/>
</dbReference>
<dbReference type="GO" id="GO:0098552">
    <property type="term" value="C:side of membrane"/>
    <property type="evidence" value="ECO:0007669"/>
    <property type="project" value="UniProtKB-KW"/>
</dbReference>
<dbReference type="GO" id="GO:0008496">
    <property type="term" value="F:mannan endo-1,6-alpha-mannosidase activity"/>
    <property type="evidence" value="ECO:0007669"/>
    <property type="project" value="UniProtKB-EC"/>
</dbReference>
<dbReference type="GO" id="GO:0007117">
    <property type="term" value="P:budding cell bud growth"/>
    <property type="evidence" value="ECO:0000318"/>
    <property type="project" value="GO_Central"/>
</dbReference>
<dbReference type="GO" id="GO:0016052">
    <property type="term" value="P:carbohydrate catabolic process"/>
    <property type="evidence" value="ECO:0007669"/>
    <property type="project" value="InterPro"/>
</dbReference>
<dbReference type="GO" id="GO:0071555">
    <property type="term" value="P:cell wall organization"/>
    <property type="evidence" value="ECO:0007669"/>
    <property type="project" value="UniProtKB-KW"/>
</dbReference>
<dbReference type="GO" id="GO:0009272">
    <property type="term" value="P:fungal-type cell wall biogenesis"/>
    <property type="evidence" value="ECO:0000315"/>
    <property type="project" value="CGD"/>
</dbReference>
<dbReference type="GO" id="GO:0010570">
    <property type="term" value="P:regulation of filamentous growth"/>
    <property type="evidence" value="ECO:0000315"/>
    <property type="project" value="CGD"/>
</dbReference>
<dbReference type="FunFam" id="1.50.10.20:FF:000006">
    <property type="entry name" value="Mannan endo-1,6-alpha-mannosidase"/>
    <property type="match status" value="1"/>
</dbReference>
<dbReference type="Gene3D" id="1.50.10.20">
    <property type="match status" value="1"/>
</dbReference>
<dbReference type="InterPro" id="IPR008928">
    <property type="entry name" value="6-hairpin_glycosidase_sf"/>
</dbReference>
<dbReference type="InterPro" id="IPR005198">
    <property type="entry name" value="Glyco_hydro_76"/>
</dbReference>
<dbReference type="InterPro" id="IPR014480">
    <property type="entry name" value="Mannan-1_6-alpha_mannosidase"/>
</dbReference>
<dbReference type="PANTHER" id="PTHR12145">
    <property type="entry name" value="MANNAN ENDO-1,6-ALPHA-MANNOSIDASE DCW1"/>
    <property type="match status" value="1"/>
</dbReference>
<dbReference type="PANTHER" id="PTHR12145:SF36">
    <property type="entry name" value="MANNAN ENDO-1,6-ALPHA-MANNOSIDASE DCW1"/>
    <property type="match status" value="1"/>
</dbReference>
<dbReference type="Pfam" id="PF03663">
    <property type="entry name" value="Glyco_hydro_76"/>
    <property type="match status" value="1"/>
</dbReference>
<dbReference type="PIRSF" id="PIRSF016302">
    <property type="entry name" value="Man_a_manosd"/>
    <property type="match status" value="1"/>
</dbReference>
<dbReference type="SUPFAM" id="SSF48208">
    <property type="entry name" value="Six-hairpin glycosidases"/>
    <property type="match status" value="1"/>
</dbReference>
<reference key="1">
    <citation type="journal article" date="2004" name="Proc. Natl. Acad. Sci. U.S.A.">
        <title>The diploid genome sequence of Candida albicans.</title>
        <authorList>
            <person name="Jones T."/>
            <person name="Federspiel N.A."/>
            <person name="Chibana H."/>
            <person name="Dungan J."/>
            <person name="Kalman S."/>
            <person name="Magee B.B."/>
            <person name="Newport G."/>
            <person name="Thorstenson Y.R."/>
            <person name="Agabian N."/>
            <person name="Magee P.T."/>
            <person name="Davis R.W."/>
            <person name="Scherer S."/>
        </authorList>
    </citation>
    <scope>NUCLEOTIDE SEQUENCE [LARGE SCALE GENOMIC DNA]</scope>
    <source>
        <strain>SC5314 / ATCC MYA-2876</strain>
    </source>
</reference>
<reference key="2">
    <citation type="journal article" date="2007" name="Genome Biol.">
        <title>Assembly of the Candida albicans genome into sixteen supercontigs aligned on the eight chromosomes.</title>
        <authorList>
            <person name="van het Hoog M."/>
            <person name="Rast T.J."/>
            <person name="Martchenko M."/>
            <person name="Grindle S."/>
            <person name="Dignard D."/>
            <person name="Hogues H."/>
            <person name="Cuomo C."/>
            <person name="Berriman M."/>
            <person name="Scherer S."/>
            <person name="Magee B.B."/>
            <person name="Whiteway M."/>
            <person name="Chibana H."/>
            <person name="Nantel A."/>
            <person name="Magee P.T."/>
        </authorList>
    </citation>
    <scope>GENOME REANNOTATION</scope>
    <source>
        <strain>SC5314 / ATCC MYA-2876</strain>
    </source>
</reference>
<reference key="3">
    <citation type="journal article" date="2013" name="Genome Biol.">
        <title>Assembly of a phased diploid Candida albicans genome facilitates allele-specific measurements and provides a simple model for repeat and indel structure.</title>
        <authorList>
            <person name="Muzzey D."/>
            <person name="Schwartz K."/>
            <person name="Weissman J.S."/>
            <person name="Sherlock G."/>
        </authorList>
    </citation>
    <scope>NUCLEOTIDE SEQUENCE [LARGE SCALE GENOMIC DNA]</scope>
    <scope>GENOME REANNOTATION</scope>
    <source>
        <strain>SC5314 / ATCC MYA-2876</strain>
    </source>
</reference>
<reference key="4">
    <citation type="journal article" date="2003" name="Eukaryot. Cell">
        <title>Roles of Candida albicans Dfg5p and Dcw1p cell surface proteins in growth and hypha formation.</title>
        <authorList>
            <person name="Spreghini E."/>
            <person name="Davis D.A."/>
            <person name="Subaran R."/>
            <person name="Kim M."/>
            <person name="Mitchell A.P."/>
        </authorList>
    </citation>
    <scope>FUNCTION</scope>
</reference>
<reference key="5">
    <citation type="journal article" date="2003" name="Yeast">
        <title>Genome-wide identification of fungal GPI proteins.</title>
        <authorList>
            <person name="De Groot P.W."/>
            <person name="Hellingwerf K.J."/>
            <person name="Klis F.M."/>
        </authorList>
    </citation>
    <scope>PREDICTION OF GPI-ANCHOR</scope>
</reference>
<reference key="6">
    <citation type="journal article" date="2004" name="Mol. Biol. Cell">
        <title>Transcription profiling of cyclic AMP signaling in Candida albicans.</title>
        <authorList>
            <person name="Harcus D."/>
            <person name="Nantel A."/>
            <person name="Marcil A."/>
            <person name="Rigby T."/>
            <person name="Whiteway M."/>
        </authorList>
    </citation>
    <scope>INDUCTION</scope>
</reference>
<reference key="7">
    <citation type="journal article" date="2011" name="J. Biol. Chem.">
        <title>Cap2-HAP complex is a critical transcriptional regulator that has dual but contrasting roles in regulation of iron homeostasis in Candida albicans.</title>
        <authorList>
            <person name="Singh R.P."/>
            <person name="Prasad H.K."/>
            <person name="Sinha I."/>
            <person name="Agarwal N."/>
            <person name="Natarajan K."/>
        </authorList>
    </citation>
    <scope>INDUCTION</scope>
</reference>